<sequence length="291" mass="31563">MADLDDIKDGKDFGIGIPQQNPAFTLKGSGSLDWGMQSRLARIFNPKTNRTVMLAFDHGYFQGPTTGLERIDINIAPLFEYADVLMCTRGILRSVVPAAANRPVVLRASGANSILTDLSNEAVAVAMEDAVRLNACAVAAQVYIGTEHEHQSIKNIIQLIDQGMRYGMPTMAVTGVGKDMVRDQRYFSLASRIAAEMGAQVIKTYYVDSGFERIAAGCPVPIVIAGGKKLPERDALEMCYQAIDQGASGVDMGRNIFQSDAPIAMLKAVHAIVHKNENAAAAYQLFLHEQN</sequence>
<dbReference type="EC" id="2.3.1.245" evidence="1"/>
<dbReference type="EMBL" id="CP000950">
    <property type="protein sequence ID" value="ACA69921.1"/>
    <property type="molecule type" value="Genomic_DNA"/>
</dbReference>
<dbReference type="RefSeq" id="WP_011191661.1">
    <property type="nucleotide sequence ID" value="NZ_CP009792.1"/>
</dbReference>
<dbReference type="SMR" id="B1JLQ4"/>
<dbReference type="KEGG" id="ypy:YPK_3654"/>
<dbReference type="PATRIC" id="fig|502800.11.peg.4409"/>
<dbReference type="GO" id="GO:0005737">
    <property type="term" value="C:cytoplasm"/>
    <property type="evidence" value="ECO:0007669"/>
    <property type="project" value="UniProtKB-SubCell"/>
</dbReference>
<dbReference type="GO" id="GO:0016747">
    <property type="term" value="F:acyltransferase activity, transferring groups other than amino-acyl groups"/>
    <property type="evidence" value="ECO:0007669"/>
    <property type="project" value="UniProtKB-UniRule"/>
</dbReference>
<dbReference type="GO" id="GO:0004332">
    <property type="term" value="F:fructose-bisphosphate aldolase activity"/>
    <property type="evidence" value="ECO:0007669"/>
    <property type="project" value="InterPro"/>
</dbReference>
<dbReference type="CDD" id="cd00958">
    <property type="entry name" value="DhnA"/>
    <property type="match status" value="1"/>
</dbReference>
<dbReference type="Gene3D" id="3.20.20.70">
    <property type="entry name" value="Aldolase class I"/>
    <property type="match status" value="1"/>
</dbReference>
<dbReference type="HAMAP" id="MF_02052">
    <property type="entry name" value="LsrF"/>
    <property type="match status" value="1"/>
</dbReference>
<dbReference type="InterPro" id="IPR013785">
    <property type="entry name" value="Aldolase_TIM"/>
</dbReference>
<dbReference type="InterPro" id="IPR002915">
    <property type="entry name" value="DeoC/FbaB/LacD_aldolase"/>
</dbReference>
<dbReference type="InterPro" id="IPR050456">
    <property type="entry name" value="DeoC/FbaB_aldolase"/>
</dbReference>
<dbReference type="InterPro" id="IPR041720">
    <property type="entry name" value="FbaB-like"/>
</dbReference>
<dbReference type="InterPro" id="IPR033673">
    <property type="entry name" value="LsrF"/>
</dbReference>
<dbReference type="NCBIfam" id="NF006081">
    <property type="entry name" value="PRK08227.1"/>
    <property type="match status" value="1"/>
</dbReference>
<dbReference type="PANTHER" id="PTHR47916:SF1">
    <property type="entry name" value="3-HYDROXY-5-PHOSPHONOOXYPENTANE-2,4-DIONE THIOLASE"/>
    <property type="match status" value="1"/>
</dbReference>
<dbReference type="PANTHER" id="PTHR47916">
    <property type="entry name" value="FRUCTOSE-BISPHOSPHATE ALDOLASE CLASS 1"/>
    <property type="match status" value="1"/>
</dbReference>
<dbReference type="Pfam" id="PF01791">
    <property type="entry name" value="DeoC"/>
    <property type="match status" value="1"/>
</dbReference>
<dbReference type="PIRSF" id="PIRSF038992">
    <property type="entry name" value="Aldolase_Ia"/>
    <property type="match status" value="1"/>
</dbReference>
<dbReference type="SMART" id="SM01133">
    <property type="entry name" value="DeoC"/>
    <property type="match status" value="1"/>
</dbReference>
<dbReference type="SUPFAM" id="SSF51569">
    <property type="entry name" value="Aldolase"/>
    <property type="match status" value="1"/>
</dbReference>
<organism>
    <name type="scientific">Yersinia pseudotuberculosis serotype O:3 (strain YPIII)</name>
    <dbReference type="NCBI Taxonomy" id="502800"/>
    <lineage>
        <taxon>Bacteria</taxon>
        <taxon>Pseudomonadati</taxon>
        <taxon>Pseudomonadota</taxon>
        <taxon>Gammaproteobacteria</taxon>
        <taxon>Enterobacterales</taxon>
        <taxon>Yersiniaceae</taxon>
        <taxon>Yersinia</taxon>
    </lineage>
</organism>
<reference key="1">
    <citation type="submission" date="2008-02" db="EMBL/GenBank/DDBJ databases">
        <title>Complete sequence of Yersinia pseudotuberculosis YPIII.</title>
        <authorList>
            <consortium name="US DOE Joint Genome Institute"/>
            <person name="Copeland A."/>
            <person name="Lucas S."/>
            <person name="Lapidus A."/>
            <person name="Glavina del Rio T."/>
            <person name="Dalin E."/>
            <person name="Tice H."/>
            <person name="Bruce D."/>
            <person name="Goodwin L."/>
            <person name="Pitluck S."/>
            <person name="Munk A.C."/>
            <person name="Brettin T."/>
            <person name="Detter J.C."/>
            <person name="Han C."/>
            <person name="Tapia R."/>
            <person name="Schmutz J."/>
            <person name="Larimer F."/>
            <person name="Land M."/>
            <person name="Hauser L."/>
            <person name="Challacombe J.F."/>
            <person name="Green L."/>
            <person name="Lindler L.E."/>
            <person name="Nikolich M.P."/>
            <person name="Richardson P."/>
        </authorList>
    </citation>
    <scope>NUCLEOTIDE SEQUENCE [LARGE SCALE GENOMIC DNA]</scope>
    <source>
        <strain>YPIII</strain>
    </source>
</reference>
<proteinExistence type="inferred from homology"/>
<protein>
    <recommendedName>
        <fullName evidence="1">3-hydroxy-5-phosphonooxypentane-2,4-dione thiolase</fullName>
        <ecNumber evidence="1">2.3.1.245</ecNumber>
    </recommendedName>
</protein>
<feature type="chain" id="PRO_0000351542" description="3-hydroxy-5-phosphonooxypentane-2,4-dione thiolase">
    <location>
        <begin position="1"/>
        <end position="291"/>
    </location>
</feature>
<feature type="active site" description="Schiff-base intermediate with substrate" evidence="1">
    <location>
        <position position="203"/>
    </location>
</feature>
<evidence type="ECO:0000255" key="1">
    <source>
        <dbReference type="HAMAP-Rule" id="MF_02052"/>
    </source>
</evidence>
<gene>
    <name evidence="1" type="primary">lsrF</name>
    <name type="ordered locus">YPK_3654</name>
</gene>
<accession>B1JLQ4</accession>
<comment type="function">
    <text evidence="1">Involved in the degradation of phospho-AI-2, thereby terminating induction of the lsr operon and closing the AI-2 signaling cycle. Catalyzes the transfer of an acetyl moiety from 3-hydroxy-5-phosphonooxypentane-2,4-dione to CoA to form glycerone phosphate and acetyl-CoA.</text>
</comment>
<comment type="catalytic activity">
    <reaction evidence="1">
        <text>dihydroxyacetone phosphate + acetyl-CoA = 3-hydroxy-2,4-dioxopentyl phosphate + CoA</text>
        <dbReference type="Rhea" id="RHEA:44736"/>
        <dbReference type="ChEBI" id="CHEBI:57287"/>
        <dbReference type="ChEBI" id="CHEBI:57288"/>
        <dbReference type="ChEBI" id="CHEBI:57642"/>
        <dbReference type="ChEBI" id="CHEBI:84359"/>
        <dbReference type="EC" id="2.3.1.245"/>
    </reaction>
</comment>
<comment type="subunit">
    <text evidence="1">Homodecamer.</text>
</comment>
<comment type="subcellular location">
    <subcellularLocation>
        <location evidence="1">Cytoplasm</location>
    </subcellularLocation>
</comment>
<comment type="similarity">
    <text evidence="1">Belongs to the DeoC/FbaB aldolase family.</text>
</comment>
<keyword id="KW-0963">Cytoplasm</keyword>
<keyword id="KW-0704">Schiff base</keyword>
<keyword id="KW-0808">Transferase</keyword>
<name>LSRF_YERPY</name>